<comment type="function">
    <text evidence="1">Catalyzes the condensation of acetyl-CoA with acetoacetyl-CoA to form 3-hydroxy-3-methylglutaryl-CoA (HMG-CoA). Functions in the mevalonate (MVA) pathway leading to isopentenyl diphosphate (IPP), a key precursor for the biosynthesis of isoprenoid compounds that are building blocks of archaeal membrane lipids.</text>
</comment>
<comment type="catalytic activity">
    <reaction evidence="1">
        <text>acetoacetyl-CoA + acetyl-CoA + H2O = (3S)-3-hydroxy-3-methylglutaryl-CoA + CoA + H(+)</text>
        <dbReference type="Rhea" id="RHEA:10188"/>
        <dbReference type="ChEBI" id="CHEBI:15377"/>
        <dbReference type="ChEBI" id="CHEBI:15378"/>
        <dbReference type="ChEBI" id="CHEBI:43074"/>
        <dbReference type="ChEBI" id="CHEBI:57286"/>
        <dbReference type="ChEBI" id="CHEBI:57287"/>
        <dbReference type="ChEBI" id="CHEBI:57288"/>
        <dbReference type="EC" id="2.3.3.10"/>
    </reaction>
    <physiologicalReaction direction="left-to-right" evidence="1">
        <dbReference type="Rhea" id="RHEA:10189"/>
    </physiologicalReaction>
</comment>
<comment type="pathway">
    <text evidence="1">Metabolic intermediate biosynthesis; (R)-mevalonate biosynthesis; (R)-mevalonate from acetyl-CoA: step 2/3.</text>
</comment>
<comment type="subunit">
    <text evidence="1">Interacts with acetoacetyl-CoA thiolase that catalyzes the precedent step in the pathway and with a DUF35 protein. The acetoacetyl-CoA thiolase/HMG-CoA synthase complex channels the intermediate via a fused CoA-binding site, which allows for efficient coupling of the endergonic thiolase reaction with the exergonic HMGCS reaction.</text>
</comment>
<comment type="similarity">
    <text evidence="1">Belongs to the thiolase-like superfamily. Archaeal HMG-CoA synthase family.</text>
</comment>
<organism>
    <name type="scientific">Methanobrevibacter smithii (strain ATCC 35061 / DSM 861 / OCM 144 / PS)</name>
    <dbReference type="NCBI Taxonomy" id="420247"/>
    <lineage>
        <taxon>Archaea</taxon>
        <taxon>Methanobacteriati</taxon>
        <taxon>Methanobacteriota</taxon>
        <taxon>Methanomada group</taxon>
        <taxon>Methanobacteria</taxon>
        <taxon>Methanobacteriales</taxon>
        <taxon>Methanobacteriaceae</taxon>
        <taxon>Methanobrevibacter</taxon>
    </lineage>
</organism>
<feature type="chain" id="PRO_1000068443" description="Hydroxymethylglutaryl-CoA synthase">
    <location>
        <begin position="1"/>
        <end position="345"/>
    </location>
</feature>
<feature type="active site" description="Proton donor/acceptor" evidence="1">
    <location>
        <position position="80"/>
    </location>
</feature>
<feature type="active site" description="Acyl-thioester intermediate" evidence="1">
    <location>
        <position position="112"/>
    </location>
</feature>
<feature type="active site" description="Proton donor/acceptor" evidence="1">
    <location>
        <position position="234"/>
    </location>
</feature>
<feature type="binding site" evidence="1">
    <location>
        <position position="28"/>
    </location>
    <ligand>
        <name>(3S)-3-hydroxy-3-methylglutaryl-CoA</name>
        <dbReference type="ChEBI" id="CHEBI:43074"/>
    </ligand>
</feature>
<feature type="binding site" evidence="1">
    <location>
        <position position="112"/>
    </location>
    <ligand>
        <name>(3S)-3-hydroxy-3-methylglutaryl-CoA</name>
        <dbReference type="ChEBI" id="CHEBI:43074"/>
    </ligand>
</feature>
<feature type="binding site" evidence="1">
    <location>
        <position position="153"/>
    </location>
    <ligand>
        <name>(3S)-3-hydroxy-3-methylglutaryl-CoA</name>
        <dbReference type="ChEBI" id="CHEBI:43074"/>
    </ligand>
</feature>
<feature type="binding site" evidence="1">
    <location>
        <position position="199"/>
    </location>
    <ligand>
        <name>CoA</name>
        <dbReference type="ChEBI" id="CHEBI:57287"/>
        <note>ligand shared with acetoacetyl-CoA thiolase</note>
    </ligand>
</feature>
<feature type="binding site" evidence="1">
    <location>
        <position position="201"/>
    </location>
    <ligand>
        <name>(3S)-3-hydroxy-3-methylglutaryl-CoA</name>
        <dbReference type="ChEBI" id="CHEBI:43074"/>
    </ligand>
</feature>
<feature type="binding site" evidence="1">
    <location>
        <position position="234"/>
    </location>
    <ligand>
        <name>(3S)-3-hydroxy-3-methylglutaryl-CoA</name>
        <dbReference type="ChEBI" id="CHEBI:43074"/>
    </ligand>
</feature>
<feature type="binding site" evidence="1">
    <location>
        <position position="239"/>
    </location>
    <ligand>
        <name>CoA</name>
        <dbReference type="ChEBI" id="CHEBI:57287"/>
        <note>ligand shared with acetoacetyl-CoA thiolase</note>
    </ligand>
</feature>
<feature type="binding site" evidence="1">
    <location>
        <position position="243"/>
    </location>
    <ligand>
        <name>(3S)-3-hydroxy-3-methylglutaryl-CoA</name>
        <dbReference type="ChEBI" id="CHEBI:43074"/>
    </ligand>
</feature>
<feature type="binding site" evidence="1">
    <location>
        <position position="266"/>
    </location>
    <ligand>
        <name>(3S)-3-hydroxy-3-methylglutaryl-CoA</name>
        <dbReference type="ChEBI" id="CHEBI:43074"/>
    </ligand>
</feature>
<feature type="binding site" evidence="1">
    <location>
        <position position="296"/>
    </location>
    <ligand>
        <name>(3S)-3-hydroxy-3-methylglutaryl-CoA</name>
        <dbReference type="ChEBI" id="CHEBI:43074"/>
    </ligand>
</feature>
<keyword id="KW-0012">Acyltransferase</keyword>
<keyword id="KW-0414">Isoprene biosynthesis</keyword>
<keyword id="KW-0808">Transferase</keyword>
<evidence type="ECO:0000255" key="1">
    <source>
        <dbReference type="HAMAP-Rule" id="MF_01409"/>
    </source>
</evidence>
<gene>
    <name type="ordered locus">Msm_1561</name>
</gene>
<name>HMGCS_METS3</name>
<accession>A5UNI8</accession>
<dbReference type="EC" id="2.3.3.10" evidence="1"/>
<dbReference type="EMBL" id="CP000678">
    <property type="protein sequence ID" value="ABQ87766.1"/>
    <property type="molecule type" value="Genomic_DNA"/>
</dbReference>
<dbReference type="RefSeq" id="WP_004035269.1">
    <property type="nucleotide sequence ID" value="NZ_CP117965.1"/>
</dbReference>
<dbReference type="SMR" id="A5UNI8"/>
<dbReference type="STRING" id="420247.Msm_1561"/>
<dbReference type="EnsemblBacteria" id="ABQ87766">
    <property type="protein sequence ID" value="ABQ87766"/>
    <property type="gene ID" value="Msm_1561"/>
</dbReference>
<dbReference type="KEGG" id="msi:Msm_1561"/>
<dbReference type="PATRIC" id="fig|420247.28.peg.1551"/>
<dbReference type="eggNOG" id="arCOG01767">
    <property type="taxonomic scope" value="Archaea"/>
</dbReference>
<dbReference type="HOGENOM" id="CLU_039592_7_0_2"/>
<dbReference type="BioCyc" id="MSMI420247:GHWZ-1601-MONOMER"/>
<dbReference type="UniPathway" id="UPA00058">
    <property type="reaction ID" value="UER00102"/>
</dbReference>
<dbReference type="Proteomes" id="UP000001992">
    <property type="component" value="Chromosome"/>
</dbReference>
<dbReference type="GO" id="GO:0003985">
    <property type="term" value="F:acetyl-CoA C-acetyltransferase activity"/>
    <property type="evidence" value="ECO:0007669"/>
    <property type="project" value="UniProtKB-UniRule"/>
</dbReference>
<dbReference type="GO" id="GO:0004421">
    <property type="term" value="F:hydroxymethylglutaryl-CoA synthase activity"/>
    <property type="evidence" value="ECO:0007669"/>
    <property type="project" value="InterPro"/>
</dbReference>
<dbReference type="GO" id="GO:0010142">
    <property type="term" value="P:farnesyl diphosphate biosynthetic process, mevalonate pathway"/>
    <property type="evidence" value="ECO:0007669"/>
    <property type="project" value="TreeGrafter"/>
</dbReference>
<dbReference type="GO" id="GO:0019287">
    <property type="term" value="P:isopentenyl diphosphate biosynthetic process, mevalonate pathway"/>
    <property type="evidence" value="ECO:0007669"/>
    <property type="project" value="UniProtKB-UniRule"/>
</dbReference>
<dbReference type="CDD" id="cd00827">
    <property type="entry name" value="init_cond_enzymes"/>
    <property type="match status" value="1"/>
</dbReference>
<dbReference type="FunFam" id="3.40.47.10:FF:000046">
    <property type="entry name" value="UPF0219 protein M1627_1703"/>
    <property type="match status" value="1"/>
</dbReference>
<dbReference type="Gene3D" id="3.40.47.10">
    <property type="match status" value="1"/>
</dbReference>
<dbReference type="HAMAP" id="MF_01409">
    <property type="entry name" value="HMG_CoA_synth_arch"/>
    <property type="match status" value="1"/>
</dbReference>
<dbReference type="InterPro" id="IPR013747">
    <property type="entry name" value="ACP_syn_III_C"/>
</dbReference>
<dbReference type="InterPro" id="IPR013528">
    <property type="entry name" value="HMG_CoA_synth_N"/>
</dbReference>
<dbReference type="InterPro" id="IPR004656">
    <property type="entry name" value="HMG_CoA_Synthase"/>
</dbReference>
<dbReference type="InterPro" id="IPR016039">
    <property type="entry name" value="Thiolase-like"/>
</dbReference>
<dbReference type="NCBIfam" id="TIGR00748">
    <property type="entry name" value="HMG_CoA_syn_Arc"/>
    <property type="match status" value="1"/>
</dbReference>
<dbReference type="NCBIfam" id="NF003274">
    <property type="entry name" value="PRK04262.1"/>
    <property type="match status" value="1"/>
</dbReference>
<dbReference type="PANTHER" id="PTHR43323">
    <property type="entry name" value="3-HYDROXY-3-METHYLGLUTARYL COENZYME A SYNTHASE"/>
    <property type="match status" value="1"/>
</dbReference>
<dbReference type="PANTHER" id="PTHR43323:SF2">
    <property type="entry name" value="HYDROXYMETHYLGLUTARYL-COA SYNTHASE"/>
    <property type="match status" value="1"/>
</dbReference>
<dbReference type="Pfam" id="PF08541">
    <property type="entry name" value="ACP_syn_III_C"/>
    <property type="match status" value="1"/>
</dbReference>
<dbReference type="Pfam" id="PF01154">
    <property type="entry name" value="HMG_CoA_synt_N"/>
    <property type="match status" value="1"/>
</dbReference>
<dbReference type="SUPFAM" id="SSF53901">
    <property type="entry name" value="Thiolase-like"/>
    <property type="match status" value="2"/>
</dbReference>
<proteinExistence type="inferred from homology"/>
<reference key="1">
    <citation type="journal article" date="2007" name="Proc. Natl. Acad. Sci. U.S.A.">
        <title>Genomic and metabolic adaptations of Methanobrevibacter smithii to the human gut.</title>
        <authorList>
            <person name="Samuel B.S."/>
            <person name="Hansen E.E."/>
            <person name="Manchester J.K."/>
            <person name="Coutinho P.M."/>
            <person name="Henrissat B."/>
            <person name="Fulton R."/>
            <person name="Latreille P."/>
            <person name="Kim K."/>
            <person name="Wilson R.K."/>
            <person name="Gordon J.I."/>
        </authorList>
    </citation>
    <scope>NUCLEOTIDE SEQUENCE [LARGE SCALE GENOMIC DNA]</scope>
    <source>
        <strain>ATCC 35061 / DSM 861 / OCM 144 / PS</strain>
    </source>
</reference>
<sequence length="345" mass="36976">MVGIVGYGAYVPSYRIKVEEIAKVWGDDPVALSRGLVVNEKSVPSADEDTATIAVTAARYALARAQIDPQKIGAIYVGSESHPYAVKPSATIVAEAINATPDLTAADLEFACKAGTAGIQMTMGLVDSDMIEYGLAIGADTSQGAPGDALEYTASAGGAAYIIGKDNTLADIEETYSFTTDTPDFYRREGQDYPSHGGRFTGEPAYFKHVLSAAKGLFEKTDSKPEDYDYACFHQPNGKFYLRAGKKLGFTSEQIKQGLLTPNIGNTYSGAVPLALSNILDVAEPGDKIFVVSYGSGAGSDGFTLTVNEEIKEKRDLAPKTQDIIDRKQYVDYAVYAKFKGKIKM</sequence>
<protein>
    <recommendedName>
        <fullName evidence="1">Hydroxymethylglutaryl-CoA synthase</fullName>
        <shortName evidence="1">HMG-CoA synthase</shortName>
        <shortName evidence="1">HMGCS</shortName>
        <ecNumber evidence="1">2.3.3.10</ecNumber>
    </recommendedName>
</protein>